<feature type="chain" id="PRO_0000322701" description="UPF0758 protein Spro_4842">
    <location>
        <begin position="1"/>
        <end position="227"/>
    </location>
</feature>
<feature type="domain" description="MPN" evidence="2">
    <location>
        <begin position="105"/>
        <end position="227"/>
    </location>
</feature>
<feature type="short sequence motif" description="JAMM motif" evidence="2">
    <location>
        <begin position="176"/>
        <end position="189"/>
    </location>
</feature>
<feature type="binding site" evidence="2">
    <location>
        <position position="176"/>
    </location>
    <ligand>
        <name>Zn(2+)</name>
        <dbReference type="ChEBI" id="CHEBI:29105"/>
        <note>catalytic</note>
    </ligand>
</feature>
<feature type="binding site" evidence="2">
    <location>
        <position position="178"/>
    </location>
    <ligand>
        <name>Zn(2+)</name>
        <dbReference type="ChEBI" id="CHEBI:29105"/>
        <note>catalytic</note>
    </ligand>
</feature>
<feature type="binding site" evidence="2">
    <location>
        <position position="189"/>
    </location>
    <ligand>
        <name>Zn(2+)</name>
        <dbReference type="ChEBI" id="CHEBI:29105"/>
        <note>catalytic</note>
    </ligand>
</feature>
<gene>
    <name type="ordered locus">Spro_4842</name>
</gene>
<accession>A8GLE5</accession>
<proteinExistence type="inferred from homology"/>
<keyword id="KW-0378">Hydrolase</keyword>
<keyword id="KW-0479">Metal-binding</keyword>
<keyword id="KW-0482">Metalloprotease</keyword>
<keyword id="KW-0645">Protease</keyword>
<keyword id="KW-0862">Zinc</keyword>
<organism>
    <name type="scientific">Serratia proteamaculans (strain 568)</name>
    <dbReference type="NCBI Taxonomy" id="399741"/>
    <lineage>
        <taxon>Bacteria</taxon>
        <taxon>Pseudomonadati</taxon>
        <taxon>Pseudomonadota</taxon>
        <taxon>Gammaproteobacteria</taxon>
        <taxon>Enterobacterales</taxon>
        <taxon>Yersiniaceae</taxon>
        <taxon>Serratia</taxon>
    </lineage>
</organism>
<dbReference type="EMBL" id="CP000826">
    <property type="protein sequence ID" value="ABV43935.1"/>
    <property type="molecule type" value="Genomic_DNA"/>
</dbReference>
<dbReference type="SMR" id="A8GLE5"/>
<dbReference type="STRING" id="399741.Spro_4842"/>
<dbReference type="KEGG" id="spe:Spro_4842"/>
<dbReference type="eggNOG" id="COG2003">
    <property type="taxonomic scope" value="Bacteria"/>
</dbReference>
<dbReference type="HOGENOM" id="CLU_073529_0_0_6"/>
<dbReference type="OrthoDB" id="9804482at2"/>
<dbReference type="GO" id="GO:0046872">
    <property type="term" value="F:metal ion binding"/>
    <property type="evidence" value="ECO:0007669"/>
    <property type="project" value="UniProtKB-KW"/>
</dbReference>
<dbReference type="GO" id="GO:0008237">
    <property type="term" value="F:metallopeptidase activity"/>
    <property type="evidence" value="ECO:0007669"/>
    <property type="project" value="UniProtKB-KW"/>
</dbReference>
<dbReference type="GO" id="GO:0006508">
    <property type="term" value="P:proteolysis"/>
    <property type="evidence" value="ECO:0007669"/>
    <property type="project" value="UniProtKB-KW"/>
</dbReference>
<dbReference type="CDD" id="cd08071">
    <property type="entry name" value="MPN_DUF2466"/>
    <property type="match status" value="1"/>
</dbReference>
<dbReference type="Gene3D" id="3.40.140.10">
    <property type="entry name" value="Cytidine Deaminase, domain 2"/>
    <property type="match status" value="1"/>
</dbReference>
<dbReference type="HAMAP" id="MF_00018">
    <property type="entry name" value="UPF0758_YicR"/>
    <property type="match status" value="1"/>
</dbReference>
<dbReference type="InterPro" id="IPR037518">
    <property type="entry name" value="MPN"/>
</dbReference>
<dbReference type="InterPro" id="IPR025657">
    <property type="entry name" value="RadC_JAB"/>
</dbReference>
<dbReference type="InterPro" id="IPR010994">
    <property type="entry name" value="RuvA_2-like"/>
</dbReference>
<dbReference type="InterPro" id="IPR001405">
    <property type="entry name" value="UPF0758"/>
</dbReference>
<dbReference type="InterPro" id="IPR020891">
    <property type="entry name" value="UPF0758_CS"/>
</dbReference>
<dbReference type="InterPro" id="IPR046778">
    <property type="entry name" value="UPF0758_N"/>
</dbReference>
<dbReference type="InterPro" id="IPR022820">
    <property type="entry name" value="UPF0758_YicR"/>
</dbReference>
<dbReference type="NCBIfam" id="NF000642">
    <property type="entry name" value="PRK00024.1"/>
    <property type="match status" value="1"/>
</dbReference>
<dbReference type="NCBIfam" id="TIGR00608">
    <property type="entry name" value="radc"/>
    <property type="match status" value="1"/>
</dbReference>
<dbReference type="PANTHER" id="PTHR30471">
    <property type="entry name" value="DNA REPAIR PROTEIN RADC"/>
    <property type="match status" value="1"/>
</dbReference>
<dbReference type="PANTHER" id="PTHR30471:SF3">
    <property type="entry name" value="UPF0758 PROTEIN YEES-RELATED"/>
    <property type="match status" value="1"/>
</dbReference>
<dbReference type="Pfam" id="PF04002">
    <property type="entry name" value="RadC"/>
    <property type="match status" value="1"/>
</dbReference>
<dbReference type="Pfam" id="PF20582">
    <property type="entry name" value="UPF0758_N"/>
    <property type="match status" value="1"/>
</dbReference>
<dbReference type="SUPFAM" id="SSF47781">
    <property type="entry name" value="RuvA domain 2-like"/>
    <property type="match status" value="1"/>
</dbReference>
<dbReference type="PROSITE" id="PS50249">
    <property type="entry name" value="MPN"/>
    <property type="match status" value="1"/>
</dbReference>
<dbReference type="PROSITE" id="PS01302">
    <property type="entry name" value="UPF0758"/>
    <property type="match status" value="1"/>
</dbReference>
<evidence type="ECO:0000255" key="1">
    <source>
        <dbReference type="HAMAP-Rule" id="MF_00018"/>
    </source>
</evidence>
<evidence type="ECO:0000255" key="2">
    <source>
        <dbReference type="PROSITE-ProRule" id="PRU01182"/>
    </source>
</evidence>
<comment type="similarity">
    <text evidence="1">Belongs to the UPF0758 family. YicR subfamily.</text>
</comment>
<name>Y4842_SERP5</name>
<reference key="1">
    <citation type="submission" date="2007-09" db="EMBL/GenBank/DDBJ databases">
        <title>Complete sequence of chromosome of Serratia proteamaculans 568.</title>
        <authorList>
            <consortium name="US DOE Joint Genome Institute"/>
            <person name="Copeland A."/>
            <person name="Lucas S."/>
            <person name="Lapidus A."/>
            <person name="Barry K."/>
            <person name="Glavina del Rio T."/>
            <person name="Dalin E."/>
            <person name="Tice H."/>
            <person name="Pitluck S."/>
            <person name="Chain P."/>
            <person name="Malfatti S."/>
            <person name="Shin M."/>
            <person name="Vergez L."/>
            <person name="Schmutz J."/>
            <person name="Larimer F."/>
            <person name="Land M."/>
            <person name="Hauser L."/>
            <person name="Kyrpides N."/>
            <person name="Kim E."/>
            <person name="Taghavi S."/>
            <person name="Newman L."/>
            <person name="Vangronsveld J."/>
            <person name="van der Lelie D."/>
            <person name="Richardson P."/>
        </authorList>
    </citation>
    <scope>NUCLEOTIDE SEQUENCE [LARGE SCALE GENOMIC DNA]</scope>
    <source>
        <strain>568</strain>
    </source>
</reference>
<protein>
    <recommendedName>
        <fullName evidence="1">UPF0758 protein Spro_4842</fullName>
    </recommendedName>
</protein>
<sequence>MSSQGITLWPDTLAPREKLLRYGASALSDAELLAIFLRTGFPGVHVMQLAEQLLEQFGSLYHLMSADHSVFCSHKGLGNSSYSQLQAISELAFRFFSSHLAQENAMLNPRMTQHYLQSLLVHHEREVFLVLFLDNQHRVIRHQEMFAGTISSVVVYPREIVREALKANAAAIILAHNHPSGKAEPSHADRLITEQVVNACLLLEIRVLDHLVIGRGECVSFAERGWL</sequence>